<reference key="1">
    <citation type="journal article" date="2010" name="J. Bacteriol.">
        <title>Whole genome sequences of two Xylella fastidiosa strains (M12 and M23) causing almond leaf scorch disease in California.</title>
        <authorList>
            <person name="Chen J."/>
            <person name="Xie G."/>
            <person name="Han S."/>
            <person name="Chertkov O."/>
            <person name="Sims D."/>
            <person name="Civerolo E.L."/>
        </authorList>
    </citation>
    <scope>NUCLEOTIDE SEQUENCE [LARGE SCALE GENOMIC DNA]</scope>
    <source>
        <strain>M23</strain>
    </source>
</reference>
<keyword id="KW-0687">Ribonucleoprotein</keyword>
<keyword id="KW-0689">Ribosomal protein</keyword>
<evidence type="ECO:0000255" key="1">
    <source>
        <dbReference type="HAMAP-Rule" id="MF_01368"/>
    </source>
</evidence>
<evidence type="ECO:0000305" key="2"/>
<accession>B2I8J4</accession>
<dbReference type="EMBL" id="CP001011">
    <property type="protein sequence ID" value="ACB91905.1"/>
    <property type="molecule type" value="Genomic_DNA"/>
</dbReference>
<dbReference type="RefSeq" id="WP_004090145.1">
    <property type="nucleotide sequence ID" value="NC_010577.1"/>
</dbReference>
<dbReference type="SMR" id="B2I8J4"/>
<dbReference type="GeneID" id="93904164"/>
<dbReference type="KEGG" id="xfn:XfasM23_0458"/>
<dbReference type="HOGENOM" id="CLU_074407_2_0_6"/>
<dbReference type="Proteomes" id="UP000001698">
    <property type="component" value="Chromosome"/>
</dbReference>
<dbReference type="GO" id="GO:0022625">
    <property type="term" value="C:cytosolic large ribosomal subunit"/>
    <property type="evidence" value="ECO:0007669"/>
    <property type="project" value="TreeGrafter"/>
</dbReference>
<dbReference type="GO" id="GO:0003735">
    <property type="term" value="F:structural constituent of ribosome"/>
    <property type="evidence" value="ECO:0007669"/>
    <property type="project" value="InterPro"/>
</dbReference>
<dbReference type="GO" id="GO:0006412">
    <property type="term" value="P:translation"/>
    <property type="evidence" value="ECO:0007669"/>
    <property type="project" value="UniProtKB-UniRule"/>
</dbReference>
<dbReference type="FunFam" id="3.90.1030.10:FF:000001">
    <property type="entry name" value="50S ribosomal protein L17"/>
    <property type="match status" value="1"/>
</dbReference>
<dbReference type="Gene3D" id="3.90.1030.10">
    <property type="entry name" value="Ribosomal protein L17"/>
    <property type="match status" value="1"/>
</dbReference>
<dbReference type="HAMAP" id="MF_01368">
    <property type="entry name" value="Ribosomal_bL17"/>
    <property type="match status" value="1"/>
</dbReference>
<dbReference type="InterPro" id="IPR000456">
    <property type="entry name" value="Ribosomal_bL17"/>
</dbReference>
<dbReference type="InterPro" id="IPR047859">
    <property type="entry name" value="Ribosomal_bL17_CS"/>
</dbReference>
<dbReference type="InterPro" id="IPR036373">
    <property type="entry name" value="Ribosomal_bL17_sf"/>
</dbReference>
<dbReference type="NCBIfam" id="TIGR00059">
    <property type="entry name" value="L17"/>
    <property type="match status" value="1"/>
</dbReference>
<dbReference type="PANTHER" id="PTHR14413:SF16">
    <property type="entry name" value="LARGE RIBOSOMAL SUBUNIT PROTEIN BL17M"/>
    <property type="match status" value="1"/>
</dbReference>
<dbReference type="PANTHER" id="PTHR14413">
    <property type="entry name" value="RIBOSOMAL PROTEIN L17"/>
    <property type="match status" value="1"/>
</dbReference>
<dbReference type="Pfam" id="PF01196">
    <property type="entry name" value="Ribosomal_L17"/>
    <property type="match status" value="1"/>
</dbReference>
<dbReference type="SUPFAM" id="SSF64263">
    <property type="entry name" value="Prokaryotic ribosomal protein L17"/>
    <property type="match status" value="1"/>
</dbReference>
<dbReference type="PROSITE" id="PS01167">
    <property type="entry name" value="RIBOSOMAL_L17"/>
    <property type="match status" value="1"/>
</dbReference>
<feature type="chain" id="PRO_1000144509" description="Large ribosomal subunit protein bL17">
    <location>
        <begin position="1"/>
        <end position="126"/>
    </location>
</feature>
<protein>
    <recommendedName>
        <fullName evidence="1">Large ribosomal subunit protein bL17</fullName>
    </recommendedName>
    <alternativeName>
        <fullName evidence="2">50S ribosomal protein L17</fullName>
    </alternativeName>
</protein>
<name>RL17_XYLF2</name>
<comment type="subunit">
    <text evidence="1">Part of the 50S ribosomal subunit. Contacts protein L32.</text>
</comment>
<comment type="similarity">
    <text evidence="1">Belongs to the bacterial ribosomal protein bL17 family.</text>
</comment>
<gene>
    <name evidence="1" type="primary">rplQ</name>
    <name type="ordered locus">XfasM23_0458</name>
</gene>
<organism>
    <name type="scientific">Xylella fastidiosa (strain M23)</name>
    <dbReference type="NCBI Taxonomy" id="405441"/>
    <lineage>
        <taxon>Bacteria</taxon>
        <taxon>Pseudomonadati</taxon>
        <taxon>Pseudomonadota</taxon>
        <taxon>Gammaproteobacteria</taxon>
        <taxon>Lysobacterales</taxon>
        <taxon>Lysobacteraceae</taxon>
        <taxon>Xylella</taxon>
    </lineage>
</organism>
<proteinExistence type="inferred from homology"/>
<sequence length="126" mass="14435">MRHQKSGRKFNRTDAHRGAMFSNMIASLFKYQLIKTTLPKAKELRRFAEPLITLAKVDSVANRRLAFARLRNKEAVGILFSNLGPRYITRPGGYIRLLKCGFRHGDNAPMAYVEMLERPIIAEEVT</sequence>